<keyword id="KW-0963">Cytoplasm</keyword>
<keyword id="KW-0489">Methyltransferase</keyword>
<keyword id="KW-0949">S-adenosyl-L-methionine</keyword>
<keyword id="KW-0808">Transferase</keyword>
<reference key="1">
    <citation type="journal article" date="2008" name="J. Bacteriol.">
        <title>Genome sequence of Lactobacillus helveticus: an organism distinguished by selective gene loss and IS element expansion.</title>
        <authorList>
            <person name="Callanan M."/>
            <person name="Kaleta P."/>
            <person name="O'Callaghan J."/>
            <person name="O'Sullivan O."/>
            <person name="Jordan K."/>
            <person name="McAuliffe O."/>
            <person name="Sangrador-Vegas A."/>
            <person name="Slattery L."/>
            <person name="Fitzgerald G.F."/>
            <person name="Beresford T."/>
            <person name="Ross R.P."/>
        </authorList>
    </citation>
    <scope>NUCLEOTIDE SEQUENCE [LARGE SCALE GENOMIC DNA]</scope>
    <source>
        <strain>DPC 4571</strain>
    </source>
</reference>
<evidence type="ECO:0000255" key="1">
    <source>
        <dbReference type="HAMAP-Rule" id="MF_00735"/>
    </source>
</evidence>
<proteinExistence type="inferred from homology"/>
<comment type="function">
    <text evidence="1">Methylates ribosomal protein L11.</text>
</comment>
<comment type="catalytic activity">
    <reaction evidence="1">
        <text>L-lysyl-[protein] + 3 S-adenosyl-L-methionine = N(6),N(6),N(6)-trimethyl-L-lysyl-[protein] + 3 S-adenosyl-L-homocysteine + 3 H(+)</text>
        <dbReference type="Rhea" id="RHEA:54192"/>
        <dbReference type="Rhea" id="RHEA-COMP:9752"/>
        <dbReference type="Rhea" id="RHEA-COMP:13826"/>
        <dbReference type="ChEBI" id="CHEBI:15378"/>
        <dbReference type="ChEBI" id="CHEBI:29969"/>
        <dbReference type="ChEBI" id="CHEBI:57856"/>
        <dbReference type="ChEBI" id="CHEBI:59789"/>
        <dbReference type="ChEBI" id="CHEBI:61961"/>
    </reaction>
</comment>
<comment type="subcellular location">
    <subcellularLocation>
        <location evidence="1">Cytoplasm</location>
    </subcellularLocation>
</comment>
<comment type="similarity">
    <text evidence="1">Belongs to the methyltransferase superfamily. PrmA family.</text>
</comment>
<feature type="chain" id="PRO_1000072792" description="Ribosomal protein L11 methyltransferase">
    <location>
        <begin position="1"/>
        <end position="315"/>
    </location>
</feature>
<feature type="binding site" evidence="1">
    <location>
        <position position="163"/>
    </location>
    <ligand>
        <name>S-adenosyl-L-methionine</name>
        <dbReference type="ChEBI" id="CHEBI:59789"/>
    </ligand>
</feature>
<feature type="binding site" evidence="1">
    <location>
        <position position="185"/>
    </location>
    <ligand>
        <name>S-adenosyl-L-methionine</name>
        <dbReference type="ChEBI" id="CHEBI:59789"/>
    </ligand>
</feature>
<feature type="binding site" evidence="1">
    <location>
        <position position="207"/>
    </location>
    <ligand>
        <name>S-adenosyl-L-methionine</name>
        <dbReference type="ChEBI" id="CHEBI:59789"/>
    </ligand>
</feature>
<feature type="binding site" evidence="1">
    <location>
        <position position="249"/>
    </location>
    <ligand>
        <name>S-adenosyl-L-methionine</name>
        <dbReference type="ChEBI" id="CHEBI:59789"/>
    </ligand>
</feature>
<accession>A8YUZ6</accession>
<name>PRMA_LACH4</name>
<dbReference type="EC" id="2.1.1.-" evidence="1"/>
<dbReference type="EMBL" id="CP000517">
    <property type="protein sequence ID" value="ABX27084.1"/>
    <property type="molecule type" value="Genomic_DNA"/>
</dbReference>
<dbReference type="RefSeq" id="WP_012211786.1">
    <property type="nucleotide sequence ID" value="NC_010080.1"/>
</dbReference>
<dbReference type="SMR" id="A8YUZ6"/>
<dbReference type="KEGG" id="lhe:lhv_1009"/>
<dbReference type="eggNOG" id="COG2264">
    <property type="taxonomic scope" value="Bacteria"/>
</dbReference>
<dbReference type="HOGENOM" id="CLU_049382_0_1_9"/>
<dbReference type="Proteomes" id="UP000000790">
    <property type="component" value="Chromosome"/>
</dbReference>
<dbReference type="GO" id="GO:0005737">
    <property type="term" value="C:cytoplasm"/>
    <property type="evidence" value="ECO:0007669"/>
    <property type="project" value="UniProtKB-SubCell"/>
</dbReference>
<dbReference type="GO" id="GO:0016279">
    <property type="term" value="F:protein-lysine N-methyltransferase activity"/>
    <property type="evidence" value="ECO:0007669"/>
    <property type="project" value="RHEA"/>
</dbReference>
<dbReference type="GO" id="GO:0032259">
    <property type="term" value="P:methylation"/>
    <property type="evidence" value="ECO:0007669"/>
    <property type="project" value="UniProtKB-KW"/>
</dbReference>
<dbReference type="CDD" id="cd02440">
    <property type="entry name" value="AdoMet_MTases"/>
    <property type="match status" value="1"/>
</dbReference>
<dbReference type="Gene3D" id="3.40.50.150">
    <property type="entry name" value="Vaccinia Virus protein VP39"/>
    <property type="match status" value="1"/>
</dbReference>
<dbReference type="HAMAP" id="MF_00735">
    <property type="entry name" value="Methyltr_PrmA"/>
    <property type="match status" value="1"/>
</dbReference>
<dbReference type="InterPro" id="IPR050078">
    <property type="entry name" value="Ribosomal_L11_MeTrfase_PrmA"/>
</dbReference>
<dbReference type="InterPro" id="IPR004498">
    <property type="entry name" value="Ribosomal_PrmA_MeTrfase"/>
</dbReference>
<dbReference type="InterPro" id="IPR029063">
    <property type="entry name" value="SAM-dependent_MTases_sf"/>
</dbReference>
<dbReference type="NCBIfam" id="TIGR00406">
    <property type="entry name" value="prmA"/>
    <property type="match status" value="1"/>
</dbReference>
<dbReference type="PANTHER" id="PTHR43648">
    <property type="entry name" value="ELECTRON TRANSFER FLAVOPROTEIN BETA SUBUNIT LYSINE METHYLTRANSFERASE"/>
    <property type="match status" value="1"/>
</dbReference>
<dbReference type="PANTHER" id="PTHR43648:SF1">
    <property type="entry name" value="ELECTRON TRANSFER FLAVOPROTEIN BETA SUBUNIT LYSINE METHYLTRANSFERASE"/>
    <property type="match status" value="1"/>
</dbReference>
<dbReference type="Pfam" id="PF06325">
    <property type="entry name" value="PrmA"/>
    <property type="match status" value="1"/>
</dbReference>
<dbReference type="PIRSF" id="PIRSF000401">
    <property type="entry name" value="RPL11_MTase"/>
    <property type="match status" value="1"/>
</dbReference>
<dbReference type="SUPFAM" id="SSF53335">
    <property type="entry name" value="S-adenosyl-L-methionine-dependent methyltransferases"/>
    <property type="match status" value="1"/>
</dbReference>
<protein>
    <recommendedName>
        <fullName evidence="1">Ribosomal protein L11 methyltransferase</fullName>
        <shortName evidence="1">L11 Mtase</shortName>
        <ecNumber evidence="1">2.1.1.-</ecNumber>
    </recommendedName>
</protein>
<sequence>MKLLIIKIDTSQEVEDALSIYAMDNLNALGVESRNRSDFEQAGWLHDSTVVDMDDIKDLPKDTYFYAYFDEEADRDELVKKFQDKMQELKGYGLNIGDAKITTSYIEDQDWNTAWQKYYHVINFSRHLAIVPKWEDYKPAFKDQQLIKLDPGLAFGTGNHKTTQLAMMGLERAIVKKPISVVDVGTGSGILAIAASKLGATDILATDISDESMTATEQNSALNDIKNIRVQKTSLLADVDGKFDIIVANILAEILLELIPQMDAHLNEGGQVIFSGIDYLQLPKIEKSLDENGFKIDLTMKQGRWVGLAITRKEK</sequence>
<organism>
    <name type="scientific">Lactobacillus helveticus (strain DPC 4571)</name>
    <dbReference type="NCBI Taxonomy" id="405566"/>
    <lineage>
        <taxon>Bacteria</taxon>
        <taxon>Bacillati</taxon>
        <taxon>Bacillota</taxon>
        <taxon>Bacilli</taxon>
        <taxon>Lactobacillales</taxon>
        <taxon>Lactobacillaceae</taxon>
        <taxon>Lactobacillus</taxon>
    </lineage>
</organism>
<gene>
    <name evidence="1" type="primary">prmA</name>
    <name type="ordered locus">lhv_1009</name>
</gene>